<accession>C3NGF2</accession>
<proteinExistence type="inferred from homology"/>
<organism>
    <name type="scientific">Saccharolobus islandicus (strain Y.N.15.51 / Yellowstone #2)</name>
    <name type="common">Sulfolobus islandicus</name>
    <dbReference type="NCBI Taxonomy" id="419942"/>
    <lineage>
        <taxon>Archaea</taxon>
        <taxon>Thermoproteota</taxon>
        <taxon>Thermoprotei</taxon>
        <taxon>Sulfolobales</taxon>
        <taxon>Sulfolobaceae</taxon>
        <taxon>Saccharolobus</taxon>
    </lineage>
</organism>
<feature type="chain" id="PRO_1000212263" description="GTP cyclohydrolase III">
    <location>
        <begin position="1"/>
        <end position="232"/>
    </location>
</feature>
<protein>
    <recommendedName>
        <fullName evidence="1">GTP cyclohydrolase III</fullName>
        <ecNumber evidence="1">3.5.4.29</ecNumber>
    </recommendedName>
</protein>
<evidence type="ECO:0000255" key="1">
    <source>
        <dbReference type="HAMAP-Rule" id="MF_00608"/>
    </source>
</evidence>
<name>GCH3_SACI1</name>
<dbReference type="EC" id="3.5.4.29" evidence="1"/>
<dbReference type="EMBL" id="CP001404">
    <property type="protein sequence ID" value="ACP48212.1"/>
    <property type="molecule type" value="Genomic_DNA"/>
</dbReference>
<dbReference type="RefSeq" id="WP_012713918.1">
    <property type="nucleotide sequence ID" value="NC_012623.1"/>
</dbReference>
<dbReference type="SMR" id="C3NGF2"/>
<dbReference type="GeneID" id="7810837"/>
<dbReference type="KEGG" id="sin:YN1551_1106"/>
<dbReference type="HOGENOM" id="CLU_080076_0_0_2"/>
<dbReference type="Proteomes" id="UP000006818">
    <property type="component" value="Chromosome"/>
</dbReference>
<dbReference type="GO" id="GO:0005525">
    <property type="term" value="F:GTP binding"/>
    <property type="evidence" value="ECO:0007669"/>
    <property type="project" value="UniProtKB-KW"/>
</dbReference>
<dbReference type="GO" id="GO:0043740">
    <property type="term" value="F:GTP cyclohydrolase IIa activity"/>
    <property type="evidence" value="ECO:0007669"/>
    <property type="project" value="UniProtKB-EC"/>
</dbReference>
<dbReference type="GO" id="GO:0009058">
    <property type="term" value="P:biosynthetic process"/>
    <property type="evidence" value="ECO:0007669"/>
    <property type="project" value="InterPro"/>
</dbReference>
<dbReference type="Gene3D" id="3.30.70.270">
    <property type="match status" value="1"/>
</dbReference>
<dbReference type="Gene3D" id="3.30.70.1230">
    <property type="entry name" value="Nucleotide cyclase"/>
    <property type="match status" value="1"/>
</dbReference>
<dbReference type="HAMAP" id="MF_00608">
    <property type="entry name" value="GTP_cyclohydro_3"/>
    <property type="match status" value="1"/>
</dbReference>
<dbReference type="InterPro" id="IPR007839">
    <property type="entry name" value="GTP_CycHdrlase_3"/>
</dbReference>
<dbReference type="InterPro" id="IPR029787">
    <property type="entry name" value="Nucleotide_cyclase"/>
</dbReference>
<dbReference type="InterPro" id="IPR043128">
    <property type="entry name" value="Rev_trsase/Diguanyl_cyclase"/>
</dbReference>
<dbReference type="PANTHER" id="PTHR42202">
    <property type="entry name" value="GTP CYCLOHYDROLASE III"/>
    <property type="match status" value="1"/>
</dbReference>
<dbReference type="PANTHER" id="PTHR42202:SF1">
    <property type="entry name" value="GTP CYCLOHYDROLASE III"/>
    <property type="match status" value="1"/>
</dbReference>
<dbReference type="Pfam" id="PF05165">
    <property type="entry name" value="GCH_III"/>
    <property type="match status" value="1"/>
</dbReference>
<dbReference type="PIRSF" id="PIRSF009265">
    <property type="entry name" value="GTP_cyclohydro_3"/>
    <property type="match status" value="1"/>
</dbReference>
<comment type="function">
    <text evidence="1">Catalyzes the formation of 2-amino-5-formylamino-6-ribofuranosylamino-4(3H)-pyrimidinone ribonucleotide monophosphate and inorganic phosphate from GTP. Also has an independent pyrophosphate phosphohydrolase activity.</text>
</comment>
<comment type="catalytic activity">
    <reaction evidence="1">
        <text>GTP + 3 H2O = 2-amino-5-formylamino-6-(5-phospho-D-ribosylamino)pyrimidin-4(3H)-one + 2 phosphate + 2 H(+)</text>
        <dbReference type="Rhea" id="RHEA:22468"/>
        <dbReference type="ChEBI" id="CHEBI:15377"/>
        <dbReference type="ChEBI" id="CHEBI:15378"/>
        <dbReference type="ChEBI" id="CHEBI:37565"/>
        <dbReference type="ChEBI" id="CHEBI:43474"/>
        <dbReference type="ChEBI" id="CHEBI:57258"/>
        <dbReference type="EC" id="3.5.4.29"/>
    </reaction>
</comment>
<comment type="similarity">
    <text evidence="1">Belongs to the archaeal-type GTP cyclohydrolase family.</text>
</comment>
<sequence length="232" mass="27068">MKVLAIKLVDYREWTERLGYDREWLIQKIQNKFMMKIHEIASQYSTFPLQLRFDNFLMIVDGITNTQLIYMINDMQENLPVGIKTCLGYGKTPLEAQWNASVCLNNKEDKFKEYVDEKIAALHFDINFNTEALKYTSVYDSFLEITNIYVDLSRFLYKIGGILQYLGGDNYLGFVSTNSVNKVIEKFSDDNKIKVGIGIGQNARTAIKLATTSLEKIRNNREKTWHIEEEYH</sequence>
<keyword id="KW-0342">GTP-binding</keyword>
<keyword id="KW-0378">Hydrolase</keyword>
<keyword id="KW-0547">Nucleotide-binding</keyword>
<gene>
    <name evidence="1" type="primary">gch3</name>
    <name type="ordered locus">YN1551_1106</name>
</gene>
<reference key="1">
    <citation type="journal article" date="2009" name="Proc. Natl. Acad. Sci. U.S.A.">
        <title>Biogeography of the Sulfolobus islandicus pan-genome.</title>
        <authorList>
            <person name="Reno M.L."/>
            <person name="Held N.L."/>
            <person name="Fields C.J."/>
            <person name="Burke P.V."/>
            <person name="Whitaker R.J."/>
        </authorList>
    </citation>
    <scope>NUCLEOTIDE SEQUENCE [LARGE SCALE GENOMIC DNA]</scope>
    <source>
        <strain>Y.N.15.51 / Yellowstone #2</strain>
    </source>
</reference>